<name>BIOD_RUTMC</name>
<evidence type="ECO:0000255" key="1">
    <source>
        <dbReference type="HAMAP-Rule" id="MF_00336"/>
    </source>
</evidence>
<reference key="1">
    <citation type="journal article" date="2007" name="Science">
        <title>The Calyptogena magnifica chemoautotrophic symbiont genome.</title>
        <authorList>
            <person name="Newton I.L.G."/>
            <person name="Woyke T."/>
            <person name="Auchtung T.A."/>
            <person name="Dilly G.F."/>
            <person name="Dutton R.J."/>
            <person name="Fisher M.C."/>
            <person name="Fontanez K.M."/>
            <person name="Lau E."/>
            <person name="Stewart F.J."/>
            <person name="Richardson P.M."/>
            <person name="Barry K.W."/>
            <person name="Saunders E."/>
            <person name="Detter J.C."/>
            <person name="Wu D."/>
            <person name="Eisen J.A."/>
            <person name="Cavanaugh C.M."/>
        </authorList>
    </citation>
    <scope>NUCLEOTIDE SEQUENCE [LARGE SCALE GENOMIC DNA]</scope>
</reference>
<comment type="function">
    <text evidence="1">Catalyzes a mechanistically unusual reaction, the ATP-dependent insertion of CO2 between the N7 and N8 nitrogen atoms of 7,8-diaminopelargonic acid (DAPA, also called 7,8-diammoniononanoate) to form a ureido ring.</text>
</comment>
<comment type="catalytic activity">
    <reaction evidence="1">
        <text>(7R,8S)-7,8-diammoniononanoate + CO2 + ATP = (4R,5S)-dethiobiotin + ADP + phosphate + 3 H(+)</text>
        <dbReference type="Rhea" id="RHEA:15805"/>
        <dbReference type="ChEBI" id="CHEBI:15378"/>
        <dbReference type="ChEBI" id="CHEBI:16526"/>
        <dbReference type="ChEBI" id="CHEBI:30616"/>
        <dbReference type="ChEBI" id="CHEBI:43474"/>
        <dbReference type="ChEBI" id="CHEBI:149469"/>
        <dbReference type="ChEBI" id="CHEBI:149473"/>
        <dbReference type="ChEBI" id="CHEBI:456216"/>
        <dbReference type="EC" id="6.3.3.3"/>
    </reaction>
</comment>
<comment type="cofactor">
    <cofactor evidence="1">
        <name>Mg(2+)</name>
        <dbReference type="ChEBI" id="CHEBI:18420"/>
    </cofactor>
</comment>
<comment type="pathway">
    <text evidence="1">Cofactor biosynthesis; biotin biosynthesis; biotin from 7,8-diaminononanoate: step 1/2.</text>
</comment>
<comment type="subunit">
    <text evidence="1">Homodimer.</text>
</comment>
<comment type="subcellular location">
    <subcellularLocation>
        <location evidence="1">Cytoplasm</location>
    </subcellularLocation>
</comment>
<comment type="similarity">
    <text evidence="1">Belongs to the dethiobiotin synthetase family.</text>
</comment>
<sequence>MKGLFISGSGTNVGKTFVAQYLIRLLSNTLKVSARKPVESDCENKNGRLIPKDALLLSKACNINEPIDKVCRYKLESCSSAQMASQDSGLKLTLDDLVDACMSDEFVIVEGTGGLLSPIARQALNSDLIQALDMPVVLVIKDELGAVNQALLSINSAQSCGLSISMLVLNQIQPNFLKNAQAIKQHTDIDINVFNQNHLASFERKVKKILLVI</sequence>
<feature type="chain" id="PRO_0000302548" description="ATP-dependent dethiobiotin synthetase BioD">
    <location>
        <begin position="1"/>
        <end position="213"/>
    </location>
</feature>
<feature type="active site" evidence="1">
    <location>
        <position position="36"/>
    </location>
</feature>
<feature type="binding site" evidence="1">
    <location>
        <begin position="12"/>
        <end position="17"/>
    </location>
    <ligand>
        <name>ATP</name>
        <dbReference type="ChEBI" id="CHEBI:30616"/>
    </ligand>
</feature>
<feature type="binding site" evidence="1">
    <location>
        <position position="16"/>
    </location>
    <ligand>
        <name>Mg(2+)</name>
        <dbReference type="ChEBI" id="CHEBI:18420"/>
    </ligand>
</feature>
<feature type="binding site" evidence="1">
    <location>
        <position position="40"/>
    </location>
    <ligand>
        <name>substrate</name>
    </ligand>
</feature>
<feature type="binding site" evidence="1">
    <location>
        <position position="53"/>
    </location>
    <ligand>
        <name>ATP</name>
        <dbReference type="ChEBI" id="CHEBI:30616"/>
    </ligand>
</feature>
<feature type="binding site" evidence="1">
    <location>
        <position position="53"/>
    </location>
    <ligand>
        <name>Mg(2+)</name>
        <dbReference type="ChEBI" id="CHEBI:18420"/>
    </ligand>
</feature>
<feature type="binding site" evidence="1">
    <location>
        <begin position="110"/>
        <end position="113"/>
    </location>
    <ligand>
        <name>ATP</name>
        <dbReference type="ChEBI" id="CHEBI:30616"/>
    </ligand>
</feature>
<feature type="binding site" evidence="1">
    <location>
        <position position="110"/>
    </location>
    <ligand>
        <name>Mg(2+)</name>
        <dbReference type="ChEBI" id="CHEBI:18420"/>
    </ligand>
</feature>
<feature type="binding site" evidence="1">
    <location>
        <begin position="170"/>
        <end position="171"/>
    </location>
    <ligand>
        <name>ATP</name>
        <dbReference type="ChEBI" id="CHEBI:30616"/>
    </ligand>
</feature>
<accession>A1AV54</accession>
<dbReference type="EC" id="6.3.3.3" evidence="1"/>
<dbReference type="EMBL" id="CP000488">
    <property type="protein sequence ID" value="ABL01811.1"/>
    <property type="molecule type" value="Genomic_DNA"/>
</dbReference>
<dbReference type="RefSeq" id="WP_011737437.1">
    <property type="nucleotide sequence ID" value="NC_008610.1"/>
</dbReference>
<dbReference type="SMR" id="A1AV54"/>
<dbReference type="STRING" id="413404.Rmag_0007"/>
<dbReference type="KEGG" id="rma:Rmag_0007"/>
<dbReference type="eggNOG" id="COG0132">
    <property type="taxonomic scope" value="Bacteria"/>
</dbReference>
<dbReference type="HOGENOM" id="CLU_072551_3_1_6"/>
<dbReference type="OrthoDB" id="9802097at2"/>
<dbReference type="UniPathway" id="UPA00078">
    <property type="reaction ID" value="UER00161"/>
</dbReference>
<dbReference type="Proteomes" id="UP000002587">
    <property type="component" value="Chromosome"/>
</dbReference>
<dbReference type="GO" id="GO:0005829">
    <property type="term" value="C:cytosol"/>
    <property type="evidence" value="ECO:0007669"/>
    <property type="project" value="TreeGrafter"/>
</dbReference>
<dbReference type="GO" id="GO:0005524">
    <property type="term" value="F:ATP binding"/>
    <property type="evidence" value="ECO:0007669"/>
    <property type="project" value="UniProtKB-UniRule"/>
</dbReference>
<dbReference type="GO" id="GO:0004141">
    <property type="term" value="F:dethiobiotin synthase activity"/>
    <property type="evidence" value="ECO:0007669"/>
    <property type="project" value="UniProtKB-UniRule"/>
</dbReference>
<dbReference type="GO" id="GO:0000287">
    <property type="term" value="F:magnesium ion binding"/>
    <property type="evidence" value="ECO:0007669"/>
    <property type="project" value="UniProtKB-UniRule"/>
</dbReference>
<dbReference type="GO" id="GO:0009102">
    <property type="term" value="P:biotin biosynthetic process"/>
    <property type="evidence" value="ECO:0007669"/>
    <property type="project" value="UniProtKB-UniRule"/>
</dbReference>
<dbReference type="CDD" id="cd03109">
    <property type="entry name" value="DTBS"/>
    <property type="match status" value="1"/>
</dbReference>
<dbReference type="Gene3D" id="3.40.50.300">
    <property type="entry name" value="P-loop containing nucleotide triphosphate hydrolases"/>
    <property type="match status" value="1"/>
</dbReference>
<dbReference type="HAMAP" id="MF_00336">
    <property type="entry name" value="BioD"/>
    <property type="match status" value="1"/>
</dbReference>
<dbReference type="InterPro" id="IPR004472">
    <property type="entry name" value="DTB_synth_BioD"/>
</dbReference>
<dbReference type="InterPro" id="IPR027417">
    <property type="entry name" value="P-loop_NTPase"/>
</dbReference>
<dbReference type="NCBIfam" id="TIGR00347">
    <property type="entry name" value="bioD"/>
    <property type="match status" value="1"/>
</dbReference>
<dbReference type="PANTHER" id="PTHR43210">
    <property type="entry name" value="DETHIOBIOTIN SYNTHETASE"/>
    <property type="match status" value="1"/>
</dbReference>
<dbReference type="PANTHER" id="PTHR43210:SF5">
    <property type="entry name" value="DETHIOBIOTIN SYNTHETASE"/>
    <property type="match status" value="1"/>
</dbReference>
<dbReference type="Pfam" id="PF13500">
    <property type="entry name" value="AAA_26"/>
    <property type="match status" value="1"/>
</dbReference>
<dbReference type="PIRSF" id="PIRSF006755">
    <property type="entry name" value="DTB_synth"/>
    <property type="match status" value="1"/>
</dbReference>
<dbReference type="SUPFAM" id="SSF52540">
    <property type="entry name" value="P-loop containing nucleoside triphosphate hydrolases"/>
    <property type="match status" value="1"/>
</dbReference>
<protein>
    <recommendedName>
        <fullName evidence="1">ATP-dependent dethiobiotin synthetase BioD</fullName>
        <ecNumber evidence="1">6.3.3.3</ecNumber>
    </recommendedName>
    <alternativeName>
        <fullName evidence="1">DTB synthetase</fullName>
        <shortName evidence="1">DTBS</shortName>
    </alternativeName>
    <alternativeName>
        <fullName evidence="1">Dethiobiotin synthase</fullName>
    </alternativeName>
</protein>
<proteinExistence type="inferred from homology"/>
<gene>
    <name evidence="1" type="primary">bioD</name>
    <name type="ordered locus">Rmag_0007</name>
</gene>
<keyword id="KW-0067">ATP-binding</keyword>
<keyword id="KW-0093">Biotin biosynthesis</keyword>
<keyword id="KW-0963">Cytoplasm</keyword>
<keyword id="KW-0436">Ligase</keyword>
<keyword id="KW-0460">Magnesium</keyword>
<keyword id="KW-0479">Metal-binding</keyword>
<keyword id="KW-0547">Nucleotide-binding</keyword>
<organism>
    <name type="scientific">Ruthia magnifica subsp. Calyptogena magnifica</name>
    <dbReference type="NCBI Taxonomy" id="413404"/>
    <lineage>
        <taxon>Bacteria</taxon>
        <taxon>Pseudomonadati</taxon>
        <taxon>Pseudomonadota</taxon>
        <taxon>Gammaproteobacteria</taxon>
        <taxon>Candidatus Pseudothioglobaceae</taxon>
        <taxon>Candidatus Ruthturnera</taxon>
    </lineage>
</organism>